<organism>
    <name type="scientific">Saccharomyces cerevisiae (strain ATCC 204508 / S288c)</name>
    <name type="common">Baker's yeast</name>
    <dbReference type="NCBI Taxonomy" id="559292"/>
    <lineage>
        <taxon>Eukaryota</taxon>
        <taxon>Fungi</taxon>
        <taxon>Dikarya</taxon>
        <taxon>Ascomycota</taxon>
        <taxon>Saccharomycotina</taxon>
        <taxon>Saccharomycetes</taxon>
        <taxon>Saccharomycetales</taxon>
        <taxon>Saccharomycetaceae</taxon>
        <taxon>Saccharomyces</taxon>
    </lineage>
</organism>
<protein>
    <recommendedName>
        <fullName>Orotate phosphoribosyltransferase 1</fullName>
        <shortName>OPRT 1</shortName>
        <shortName>OPRTase 1</shortName>
        <ecNumber>2.4.2.10</ecNumber>
    </recommendedName>
</protein>
<evidence type="ECO:0000250" key="1"/>
<evidence type="ECO:0000269" key="2">
    <source>
    </source>
</evidence>
<evidence type="ECO:0000305" key="3"/>
<evidence type="ECO:0007744" key="4">
    <source>
    </source>
</evidence>
<evidence type="ECO:0007829" key="5">
    <source>
        <dbReference type="PDB" id="4WML"/>
    </source>
</evidence>
<evidence type="ECO:0007829" key="6">
    <source>
        <dbReference type="PDB" id="4WN3"/>
    </source>
</evidence>
<comment type="function">
    <text evidence="1">Catalyzes the transfer of a ribosyl phosphate group from 5-phosphoribose 1-diphosphate to orotate, leading to the formation of orotidine monophosphate (OMP).</text>
</comment>
<comment type="catalytic activity">
    <reaction>
        <text>orotidine 5'-phosphate + diphosphate = orotate + 5-phospho-alpha-D-ribose 1-diphosphate</text>
        <dbReference type="Rhea" id="RHEA:10380"/>
        <dbReference type="ChEBI" id="CHEBI:30839"/>
        <dbReference type="ChEBI" id="CHEBI:33019"/>
        <dbReference type="ChEBI" id="CHEBI:57538"/>
        <dbReference type="ChEBI" id="CHEBI:58017"/>
        <dbReference type="EC" id="2.4.2.10"/>
    </reaction>
</comment>
<comment type="pathway">
    <text>Pyrimidine metabolism; UMP biosynthesis via de novo pathway; UMP from orotate: step 1/2.</text>
</comment>
<comment type="subunit">
    <text evidence="1">Homodimer.</text>
</comment>
<comment type="miscellaneous">
    <text>There are two genes coding for OPRT in yeast.</text>
</comment>
<comment type="miscellaneous">
    <text evidence="2">Present with 39300 molecules/cell in log phase SD medium.</text>
</comment>
<comment type="similarity">
    <text evidence="3">Belongs to the purine/pyrimidine phosphoribosyltransferase family. PyrE subfamily.</text>
</comment>
<sequence>MPIMLEDYQKNFLELAIECQALRFGSFKLKSGRESPYFFNLGLFNTGKLLSNLATAYAIAIIQSDLKFDVIFGPAYKGIPLAAIVCVKLAEIGGSKFQNIQYAFNRKEAKDHGEGGIIVGSALENKRILIIDDVMTAGTAINEAFEIISNAKGQVVGSIIALDRQEVVSTDDKEGLSATQTVSKKYGIPVLSIVSLIHIITYLEGRITAEEKSKIEQYLQTYGASA</sequence>
<keyword id="KW-0002">3D-structure</keyword>
<keyword id="KW-0328">Glycosyltransferase</keyword>
<keyword id="KW-0597">Phosphoprotein</keyword>
<keyword id="KW-0665">Pyrimidine biosynthesis</keyword>
<keyword id="KW-1185">Reference proteome</keyword>
<keyword id="KW-0808">Transferase</keyword>
<proteinExistence type="evidence at protein level"/>
<name>PYRE_YEAST</name>
<feature type="chain" id="PRO_0000110804" description="Orotate phosphoribosyltransferase 1">
    <location>
        <begin position="1"/>
        <end position="226"/>
    </location>
</feature>
<feature type="binding site" description="in other chain" evidence="1">
    <location>
        <position position="30"/>
    </location>
    <ligand>
        <name>5-phospho-alpha-D-ribose 1-diphosphate</name>
        <dbReference type="ChEBI" id="CHEBI:58017"/>
        <note>ligand shared between dimeric partners</note>
    </ligand>
</feature>
<feature type="binding site" evidence="1">
    <location>
        <begin position="38"/>
        <end position="39"/>
    </location>
    <ligand>
        <name>orotate</name>
        <dbReference type="ChEBI" id="CHEBI:30839"/>
    </ligand>
</feature>
<feature type="binding site" description="in other chain" evidence="1">
    <location>
        <begin position="76"/>
        <end position="77"/>
    </location>
    <ligand>
        <name>5-phospho-alpha-D-ribose 1-diphosphate</name>
        <dbReference type="ChEBI" id="CHEBI:58017"/>
        <note>ligand shared between dimeric partners</note>
    </ligand>
</feature>
<feature type="binding site" evidence="1">
    <location>
        <position position="106"/>
    </location>
    <ligand>
        <name>5-phospho-alpha-D-ribose 1-diphosphate</name>
        <dbReference type="ChEBI" id="CHEBI:58017"/>
        <note>ligand shared between dimeric partners</note>
    </ligand>
</feature>
<feature type="binding site" description="in other chain" evidence="1">
    <location>
        <position position="107"/>
    </location>
    <ligand>
        <name>5-phospho-alpha-D-ribose 1-diphosphate</name>
        <dbReference type="ChEBI" id="CHEBI:58017"/>
        <note>ligand shared between dimeric partners</note>
    </ligand>
</feature>
<feature type="binding site" evidence="1">
    <location>
        <position position="110"/>
    </location>
    <ligand>
        <name>5-phospho-alpha-D-ribose 1-diphosphate</name>
        <dbReference type="ChEBI" id="CHEBI:58017"/>
        <note>ligand shared between dimeric partners</note>
    </ligand>
</feature>
<feature type="binding site" evidence="1">
    <location>
        <position position="112"/>
    </location>
    <ligand>
        <name>5-phospho-alpha-D-ribose 1-diphosphate</name>
        <dbReference type="ChEBI" id="CHEBI:58017"/>
        <note>ligand shared between dimeric partners</note>
    </ligand>
</feature>
<feature type="binding site" description="in other chain" evidence="1">
    <location>
        <begin position="132"/>
        <end position="140"/>
    </location>
    <ligand>
        <name>5-phospho-alpha-D-ribose 1-diphosphate</name>
        <dbReference type="ChEBI" id="CHEBI:58017"/>
        <note>ligand shared between dimeric partners</note>
    </ligand>
</feature>
<feature type="binding site" evidence="1">
    <location>
        <position position="136"/>
    </location>
    <ligand>
        <name>orotate</name>
        <dbReference type="ChEBI" id="CHEBI:30839"/>
    </ligand>
</feature>
<feature type="binding site" evidence="1">
    <location>
        <position position="164"/>
    </location>
    <ligand>
        <name>orotate</name>
        <dbReference type="ChEBI" id="CHEBI:30839"/>
    </ligand>
</feature>
<feature type="modified residue" description="Phosphoserine" evidence="4">
    <location>
        <position position="213"/>
    </location>
</feature>
<feature type="modified residue" description="Phosphoserine" evidence="4">
    <location>
        <position position="225"/>
    </location>
</feature>
<feature type="sequence conflict" description="In Ref. 1; CAA32901." evidence="3" ref="1">
    <original>N</original>
    <variation>S</variation>
    <location>
        <position position="150"/>
    </location>
</feature>
<feature type="helix" evidence="5">
    <location>
        <begin position="7"/>
        <end position="18"/>
    </location>
</feature>
<feature type="strand" evidence="5">
    <location>
        <begin position="21"/>
        <end position="28"/>
    </location>
</feature>
<feature type="strand" evidence="6">
    <location>
        <begin position="30"/>
        <end position="32"/>
    </location>
</feature>
<feature type="strand" evidence="5">
    <location>
        <begin position="34"/>
        <end position="39"/>
    </location>
</feature>
<feature type="helix" evidence="5">
    <location>
        <begin position="41"/>
        <end position="43"/>
    </location>
</feature>
<feature type="helix" evidence="5">
    <location>
        <begin position="47"/>
        <end position="63"/>
    </location>
</feature>
<feature type="strand" evidence="5">
    <location>
        <begin position="69"/>
        <end position="73"/>
    </location>
</feature>
<feature type="turn" evidence="5">
    <location>
        <begin position="75"/>
        <end position="77"/>
    </location>
</feature>
<feature type="helix" evidence="5">
    <location>
        <begin position="78"/>
        <end position="92"/>
    </location>
</feature>
<feature type="helix" evidence="5">
    <location>
        <begin position="95"/>
        <end position="97"/>
    </location>
</feature>
<feature type="strand" evidence="5">
    <location>
        <begin position="101"/>
        <end position="105"/>
    </location>
</feature>
<feature type="strand" evidence="5">
    <location>
        <begin position="118"/>
        <end position="121"/>
    </location>
</feature>
<feature type="strand" evidence="5">
    <location>
        <begin position="127"/>
        <end position="131"/>
    </location>
</feature>
<feature type="strand" evidence="6">
    <location>
        <begin position="136"/>
        <end position="138"/>
    </location>
</feature>
<feature type="helix" evidence="5">
    <location>
        <begin position="139"/>
        <end position="150"/>
    </location>
</feature>
<feature type="strand" evidence="5">
    <location>
        <begin position="154"/>
        <end position="163"/>
    </location>
</feature>
<feature type="strand" evidence="5">
    <location>
        <begin position="166"/>
        <end position="168"/>
    </location>
</feature>
<feature type="helix" evidence="5">
    <location>
        <begin position="178"/>
        <end position="186"/>
    </location>
</feature>
<feature type="strand" evidence="5">
    <location>
        <begin position="190"/>
        <end position="195"/>
    </location>
</feature>
<feature type="helix" evidence="5">
    <location>
        <begin position="196"/>
        <end position="203"/>
    </location>
</feature>
<feature type="turn" evidence="5">
    <location>
        <begin position="204"/>
        <end position="206"/>
    </location>
</feature>
<feature type="helix" evidence="5">
    <location>
        <begin position="209"/>
        <end position="222"/>
    </location>
</feature>
<gene>
    <name type="primary">URA5</name>
    <name type="synonym">PYR5</name>
    <name type="ordered locus">YML106W</name>
    <name type="ORF">YM8339.13</name>
</gene>
<accession>P13298</accession>
<accession>D6W0H8</accession>
<dbReference type="EC" id="2.4.2.10"/>
<dbReference type="EMBL" id="X14795">
    <property type="protein sequence ID" value="CAA32901.1"/>
    <property type="molecule type" value="Genomic_DNA"/>
</dbReference>
<dbReference type="EMBL" id="Z49210">
    <property type="protein sequence ID" value="CAA89112.1"/>
    <property type="molecule type" value="Genomic_DNA"/>
</dbReference>
<dbReference type="EMBL" id="AY693160">
    <property type="protein sequence ID" value="AAT93179.1"/>
    <property type="molecule type" value="Genomic_DNA"/>
</dbReference>
<dbReference type="EMBL" id="X65783">
    <property type="protein sequence ID" value="CAA46665.1"/>
    <property type="molecule type" value="Genomic_DNA"/>
</dbReference>
<dbReference type="EMBL" id="BK006946">
    <property type="protein sequence ID" value="DAA09792.1"/>
    <property type="molecule type" value="Genomic_DNA"/>
</dbReference>
<dbReference type="PIR" id="S53966">
    <property type="entry name" value="XJBY5"/>
</dbReference>
<dbReference type="RefSeq" id="NP_013601.1">
    <property type="nucleotide sequence ID" value="NM_001182468.1"/>
</dbReference>
<dbReference type="PDB" id="2PRY">
    <property type="method" value="X-ray"/>
    <property type="resolution" value="2.35 A"/>
    <property type="chains" value="A=1-226"/>
</dbReference>
<dbReference type="PDB" id="2PRZ">
    <property type="method" value="X-ray"/>
    <property type="resolution" value="1.90 A"/>
    <property type="chains" value="A/B/C/D=1-226"/>
</dbReference>
<dbReference type="PDB" id="2PS1">
    <property type="method" value="X-ray"/>
    <property type="resolution" value="1.75 A"/>
    <property type="chains" value="A/B=1-226"/>
</dbReference>
<dbReference type="PDB" id="4WML">
    <property type="method" value="X-ray"/>
    <property type="resolution" value="1.73 A"/>
    <property type="chains" value="A=2-226"/>
</dbReference>
<dbReference type="PDB" id="4WN3">
    <property type="method" value="X-ray"/>
    <property type="resolution" value="1.80 A"/>
    <property type="chains" value="A=1-226"/>
</dbReference>
<dbReference type="PDBsum" id="2PRY"/>
<dbReference type="PDBsum" id="2PRZ"/>
<dbReference type="PDBsum" id="2PS1"/>
<dbReference type="PDBsum" id="4WML"/>
<dbReference type="PDBsum" id="4WN3"/>
<dbReference type="BMRB" id="P13298"/>
<dbReference type="SMR" id="P13298"/>
<dbReference type="BioGRID" id="35037">
    <property type="interactions" value="180"/>
</dbReference>
<dbReference type="DIP" id="DIP-4859N"/>
<dbReference type="FunCoup" id="P13298">
    <property type="interactions" value="272"/>
</dbReference>
<dbReference type="IntAct" id="P13298">
    <property type="interactions" value="6"/>
</dbReference>
<dbReference type="MINT" id="P13298"/>
<dbReference type="STRING" id="4932.YML106W"/>
<dbReference type="iPTMnet" id="P13298"/>
<dbReference type="PaxDb" id="4932-YML106W"/>
<dbReference type="PeptideAtlas" id="P13298"/>
<dbReference type="TopDownProteomics" id="P13298"/>
<dbReference type="EnsemblFungi" id="YML106W_mRNA">
    <property type="protein sequence ID" value="YML106W"/>
    <property type="gene ID" value="YML106W"/>
</dbReference>
<dbReference type="GeneID" id="854865"/>
<dbReference type="KEGG" id="sce:YML106W"/>
<dbReference type="AGR" id="SGD:S000004574"/>
<dbReference type="SGD" id="S000004574">
    <property type="gene designation" value="URA5"/>
</dbReference>
<dbReference type="VEuPathDB" id="FungiDB:YML106W"/>
<dbReference type="eggNOG" id="KOG1377">
    <property type="taxonomic scope" value="Eukaryota"/>
</dbReference>
<dbReference type="GeneTree" id="ENSGT00390000001856"/>
<dbReference type="HOGENOM" id="CLU_074878_0_1_1"/>
<dbReference type="InParanoid" id="P13298"/>
<dbReference type="OMA" id="SPFFMNA"/>
<dbReference type="OrthoDB" id="5553476at2759"/>
<dbReference type="BioCyc" id="MetaCyc:YML106W-MONOMER"/>
<dbReference type="BioCyc" id="YEAST:YML106W-MONOMER"/>
<dbReference type="BRENDA" id="2.4.2.10">
    <property type="organism ID" value="984"/>
</dbReference>
<dbReference type="UniPathway" id="UPA00070">
    <property type="reaction ID" value="UER00119"/>
</dbReference>
<dbReference type="BioGRID-ORCS" id="854865">
    <property type="hits" value="3 hits in 10 CRISPR screens"/>
</dbReference>
<dbReference type="EvolutionaryTrace" id="P13298"/>
<dbReference type="PRO" id="PR:P13298"/>
<dbReference type="Proteomes" id="UP000002311">
    <property type="component" value="Chromosome XIII"/>
</dbReference>
<dbReference type="RNAct" id="P13298">
    <property type="molecule type" value="protein"/>
</dbReference>
<dbReference type="GO" id="GO:0005737">
    <property type="term" value="C:cytoplasm"/>
    <property type="evidence" value="ECO:0007005"/>
    <property type="project" value="SGD"/>
</dbReference>
<dbReference type="GO" id="GO:0005634">
    <property type="term" value="C:nucleus"/>
    <property type="evidence" value="ECO:0007005"/>
    <property type="project" value="SGD"/>
</dbReference>
<dbReference type="GO" id="GO:0004588">
    <property type="term" value="F:orotate phosphoribosyltransferase activity"/>
    <property type="evidence" value="ECO:0000314"/>
    <property type="project" value="SGD"/>
</dbReference>
<dbReference type="GO" id="GO:0006207">
    <property type="term" value="P:'de novo' pyrimidine nucleobase biosynthetic process"/>
    <property type="evidence" value="ECO:0000315"/>
    <property type="project" value="SGD"/>
</dbReference>
<dbReference type="GO" id="GO:0044205">
    <property type="term" value="P:'de novo' UMP biosynthetic process"/>
    <property type="evidence" value="ECO:0007669"/>
    <property type="project" value="UniProtKB-UniPathway"/>
</dbReference>
<dbReference type="GO" id="GO:0006221">
    <property type="term" value="P:pyrimidine nucleotide biosynthetic process"/>
    <property type="evidence" value="ECO:0000318"/>
    <property type="project" value="GO_Central"/>
</dbReference>
<dbReference type="GO" id="GO:0046132">
    <property type="term" value="P:pyrimidine ribonucleoside biosynthetic process"/>
    <property type="evidence" value="ECO:0000314"/>
    <property type="project" value="SGD"/>
</dbReference>
<dbReference type="CDD" id="cd06223">
    <property type="entry name" value="PRTases_typeI"/>
    <property type="match status" value="1"/>
</dbReference>
<dbReference type="FunFam" id="3.40.50.2020:FF:000008">
    <property type="entry name" value="Orotate phosphoribosyltransferase"/>
    <property type="match status" value="1"/>
</dbReference>
<dbReference type="Gene3D" id="3.40.50.2020">
    <property type="match status" value="1"/>
</dbReference>
<dbReference type="HAMAP" id="MF_01208">
    <property type="entry name" value="PyrE"/>
    <property type="match status" value="1"/>
</dbReference>
<dbReference type="InterPro" id="IPR023031">
    <property type="entry name" value="OPRT"/>
</dbReference>
<dbReference type="InterPro" id="IPR004467">
    <property type="entry name" value="Or_phspho_trans_dom"/>
</dbReference>
<dbReference type="InterPro" id="IPR000836">
    <property type="entry name" value="PRibTrfase_dom"/>
</dbReference>
<dbReference type="InterPro" id="IPR029057">
    <property type="entry name" value="PRTase-like"/>
</dbReference>
<dbReference type="NCBIfam" id="TIGR00336">
    <property type="entry name" value="pyrE"/>
    <property type="match status" value="1"/>
</dbReference>
<dbReference type="PANTHER" id="PTHR46683">
    <property type="entry name" value="OROTATE PHOSPHORIBOSYLTRANSFERASE 1-RELATED"/>
    <property type="match status" value="1"/>
</dbReference>
<dbReference type="PANTHER" id="PTHR46683:SF1">
    <property type="entry name" value="OROTATE PHOSPHORIBOSYLTRANSFERASE 1-RELATED"/>
    <property type="match status" value="1"/>
</dbReference>
<dbReference type="Pfam" id="PF00156">
    <property type="entry name" value="Pribosyltran"/>
    <property type="match status" value="1"/>
</dbReference>
<dbReference type="SUPFAM" id="SSF53271">
    <property type="entry name" value="PRTase-like"/>
    <property type="match status" value="1"/>
</dbReference>
<dbReference type="PROSITE" id="PS00103">
    <property type="entry name" value="PUR_PYR_PR_TRANSFER"/>
    <property type="match status" value="1"/>
</dbReference>
<reference key="1">
    <citation type="journal article" date="1989" name="Mol. Gen. Genet.">
        <title>Structure and expression of the URA5 gene of Saccharomyces cerevisiae.</title>
        <authorList>
            <person name="de Montigny J."/>
            <person name="Belarbi A."/>
            <person name="Hubert J.-C."/>
            <person name="Lacroute F."/>
        </authorList>
    </citation>
    <scope>NUCLEOTIDE SEQUENCE [GENOMIC DNA]</scope>
</reference>
<reference key="2">
    <citation type="journal article" date="1997" name="Nature">
        <title>The nucleotide sequence of Saccharomyces cerevisiae chromosome XIII.</title>
        <authorList>
            <person name="Bowman S."/>
            <person name="Churcher C.M."/>
            <person name="Badcock K."/>
            <person name="Brown D."/>
            <person name="Chillingworth T."/>
            <person name="Connor R."/>
            <person name="Dedman K."/>
            <person name="Devlin K."/>
            <person name="Gentles S."/>
            <person name="Hamlin N."/>
            <person name="Hunt S."/>
            <person name="Jagels K."/>
            <person name="Lye G."/>
            <person name="Moule S."/>
            <person name="Odell C."/>
            <person name="Pearson D."/>
            <person name="Rajandream M.A."/>
            <person name="Rice P."/>
            <person name="Skelton J."/>
            <person name="Walsh S.V."/>
            <person name="Whitehead S."/>
            <person name="Barrell B.G."/>
        </authorList>
    </citation>
    <scope>NUCLEOTIDE SEQUENCE [LARGE SCALE GENOMIC DNA]</scope>
    <source>
        <strain>ATCC 204508 / S288c</strain>
    </source>
</reference>
<reference key="3">
    <citation type="journal article" date="2014" name="G3 (Bethesda)">
        <title>The reference genome sequence of Saccharomyces cerevisiae: Then and now.</title>
        <authorList>
            <person name="Engel S.R."/>
            <person name="Dietrich F.S."/>
            <person name="Fisk D.G."/>
            <person name="Binkley G."/>
            <person name="Balakrishnan R."/>
            <person name="Costanzo M.C."/>
            <person name="Dwight S.S."/>
            <person name="Hitz B.C."/>
            <person name="Karra K."/>
            <person name="Nash R.S."/>
            <person name="Weng S."/>
            <person name="Wong E.D."/>
            <person name="Lloyd P."/>
            <person name="Skrzypek M.S."/>
            <person name="Miyasato S.R."/>
            <person name="Simison M."/>
            <person name="Cherry J.M."/>
        </authorList>
    </citation>
    <scope>GENOME REANNOTATION</scope>
    <source>
        <strain>ATCC 204508 / S288c</strain>
    </source>
</reference>
<reference key="4">
    <citation type="journal article" date="2007" name="Genome Res.">
        <title>Approaching a complete repository of sequence-verified protein-encoding clones for Saccharomyces cerevisiae.</title>
        <authorList>
            <person name="Hu Y."/>
            <person name="Rolfs A."/>
            <person name="Bhullar B."/>
            <person name="Murthy T.V.S."/>
            <person name="Zhu C."/>
            <person name="Berger M.F."/>
            <person name="Camargo A.A."/>
            <person name="Kelley F."/>
            <person name="McCarron S."/>
            <person name="Jepson D."/>
            <person name="Richardson A."/>
            <person name="Raphael J."/>
            <person name="Moreira D."/>
            <person name="Taycher E."/>
            <person name="Zuo D."/>
            <person name="Mohr S."/>
            <person name="Kane M.F."/>
            <person name="Williamson J."/>
            <person name="Simpson A.J.G."/>
            <person name="Bulyk M.L."/>
            <person name="Harlow E."/>
            <person name="Marsischky G."/>
            <person name="Kolodner R.D."/>
            <person name="LaBaer J."/>
        </authorList>
    </citation>
    <scope>NUCLEOTIDE SEQUENCE [GENOMIC DNA]</scope>
    <source>
        <strain>ATCC 204508 / S288c</strain>
    </source>
</reference>
<reference key="5">
    <citation type="submission" date="1995-02" db="EMBL/GenBank/DDBJ databases">
        <authorList>
            <person name="Stirling C.J."/>
        </authorList>
    </citation>
    <scope>NUCLEOTIDE SEQUENCE [GENOMIC DNA] OF 13-226</scope>
</reference>
<reference key="6">
    <citation type="journal article" date="2003" name="Nature">
        <title>Global analysis of protein expression in yeast.</title>
        <authorList>
            <person name="Ghaemmaghami S."/>
            <person name="Huh W.-K."/>
            <person name="Bower K."/>
            <person name="Howson R.W."/>
            <person name="Belle A."/>
            <person name="Dephoure N."/>
            <person name="O'Shea E.K."/>
            <person name="Weissman J.S."/>
        </authorList>
    </citation>
    <scope>LEVEL OF PROTEIN EXPRESSION [LARGE SCALE ANALYSIS]</scope>
</reference>
<reference key="7">
    <citation type="journal article" date="2009" name="Science">
        <title>Global analysis of Cdk1 substrate phosphorylation sites provides insights into evolution.</title>
        <authorList>
            <person name="Holt L.J."/>
            <person name="Tuch B.B."/>
            <person name="Villen J."/>
            <person name="Johnson A.D."/>
            <person name="Gygi S.P."/>
            <person name="Morgan D.O."/>
        </authorList>
    </citation>
    <scope>PHOSPHORYLATION [LARGE SCALE ANALYSIS] AT SER-213 AND SER-225</scope>
    <scope>IDENTIFICATION BY MASS SPECTROMETRY [LARGE SCALE ANALYSIS]</scope>
</reference>